<proteinExistence type="inferred from homology"/>
<reference key="1">
    <citation type="journal article" date="2004" name="Nat. Biotechnol.">
        <title>Complete genome sequence of the metabolically versatile photosynthetic bacterium Rhodopseudomonas palustris.</title>
        <authorList>
            <person name="Larimer F.W."/>
            <person name="Chain P."/>
            <person name="Hauser L."/>
            <person name="Lamerdin J.E."/>
            <person name="Malfatti S."/>
            <person name="Do L."/>
            <person name="Land M.L."/>
            <person name="Pelletier D.A."/>
            <person name="Beatty J.T."/>
            <person name="Lang A.S."/>
            <person name="Tabita F.R."/>
            <person name="Gibson J.L."/>
            <person name="Hanson T.E."/>
            <person name="Bobst C."/>
            <person name="Torres y Torres J.L."/>
            <person name="Peres C."/>
            <person name="Harrison F.H."/>
            <person name="Gibson J."/>
            <person name="Harwood C.S."/>
        </authorList>
    </citation>
    <scope>NUCLEOTIDE SEQUENCE [LARGE SCALE GENOMIC DNA]</scope>
    <source>
        <strain>ATCC BAA-98 / CGA009</strain>
    </source>
</reference>
<dbReference type="EC" id="2.8.1.13" evidence="1"/>
<dbReference type="EMBL" id="BX572597">
    <property type="protein sequence ID" value="CAE26749.1"/>
    <property type="status" value="ALT_INIT"/>
    <property type="molecule type" value="Genomic_DNA"/>
</dbReference>
<dbReference type="RefSeq" id="WP_079403157.1">
    <property type="nucleotide sequence ID" value="NZ_CP116810.1"/>
</dbReference>
<dbReference type="SMR" id="Q6NA79"/>
<dbReference type="STRING" id="258594.RPA1306"/>
<dbReference type="GeneID" id="66892330"/>
<dbReference type="eggNOG" id="COG0482">
    <property type="taxonomic scope" value="Bacteria"/>
</dbReference>
<dbReference type="HOGENOM" id="CLU_035188_0_1_5"/>
<dbReference type="GO" id="GO:0005737">
    <property type="term" value="C:cytoplasm"/>
    <property type="evidence" value="ECO:0007669"/>
    <property type="project" value="UniProtKB-SubCell"/>
</dbReference>
<dbReference type="GO" id="GO:0005524">
    <property type="term" value="F:ATP binding"/>
    <property type="evidence" value="ECO:0007669"/>
    <property type="project" value="UniProtKB-KW"/>
</dbReference>
<dbReference type="GO" id="GO:0000049">
    <property type="term" value="F:tRNA binding"/>
    <property type="evidence" value="ECO:0007669"/>
    <property type="project" value="UniProtKB-KW"/>
</dbReference>
<dbReference type="GO" id="GO:0103016">
    <property type="term" value="F:tRNA-uridine 2-sulfurtransferase activity"/>
    <property type="evidence" value="ECO:0007669"/>
    <property type="project" value="UniProtKB-EC"/>
</dbReference>
<dbReference type="GO" id="GO:0002143">
    <property type="term" value="P:tRNA wobble position uridine thiolation"/>
    <property type="evidence" value="ECO:0007669"/>
    <property type="project" value="TreeGrafter"/>
</dbReference>
<dbReference type="CDD" id="cd01998">
    <property type="entry name" value="MnmA_TRMU-like"/>
    <property type="match status" value="1"/>
</dbReference>
<dbReference type="FunFam" id="2.30.30.280:FF:000001">
    <property type="entry name" value="tRNA-specific 2-thiouridylase MnmA"/>
    <property type="match status" value="1"/>
</dbReference>
<dbReference type="FunFam" id="3.40.50.620:FF:000115">
    <property type="entry name" value="tRNA-specific 2-thiouridylase MnmA"/>
    <property type="match status" value="1"/>
</dbReference>
<dbReference type="Gene3D" id="2.30.30.280">
    <property type="entry name" value="Adenine nucleotide alpha hydrolases-like domains"/>
    <property type="match status" value="1"/>
</dbReference>
<dbReference type="Gene3D" id="3.40.50.620">
    <property type="entry name" value="HUPs"/>
    <property type="match status" value="1"/>
</dbReference>
<dbReference type="Gene3D" id="2.40.30.10">
    <property type="entry name" value="Translation factors"/>
    <property type="match status" value="1"/>
</dbReference>
<dbReference type="HAMAP" id="MF_00144">
    <property type="entry name" value="tRNA_thiouridyl_MnmA"/>
    <property type="match status" value="1"/>
</dbReference>
<dbReference type="InterPro" id="IPR004506">
    <property type="entry name" value="MnmA-like"/>
</dbReference>
<dbReference type="InterPro" id="IPR046885">
    <property type="entry name" value="MnmA-like_C"/>
</dbReference>
<dbReference type="InterPro" id="IPR046884">
    <property type="entry name" value="MnmA-like_central"/>
</dbReference>
<dbReference type="InterPro" id="IPR023382">
    <property type="entry name" value="MnmA-like_central_sf"/>
</dbReference>
<dbReference type="InterPro" id="IPR014729">
    <property type="entry name" value="Rossmann-like_a/b/a_fold"/>
</dbReference>
<dbReference type="NCBIfam" id="NF001138">
    <property type="entry name" value="PRK00143.1"/>
    <property type="match status" value="1"/>
</dbReference>
<dbReference type="NCBIfam" id="TIGR00420">
    <property type="entry name" value="trmU"/>
    <property type="match status" value="1"/>
</dbReference>
<dbReference type="PANTHER" id="PTHR11933:SF5">
    <property type="entry name" value="MITOCHONDRIAL TRNA-SPECIFIC 2-THIOURIDYLASE 1"/>
    <property type="match status" value="1"/>
</dbReference>
<dbReference type="PANTHER" id="PTHR11933">
    <property type="entry name" value="TRNA 5-METHYLAMINOMETHYL-2-THIOURIDYLATE -METHYLTRANSFERASE"/>
    <property type="match status" value="1"/>
</dbReference>
<dbReference type="Pfam" id="PF03054">
    <property type="entry name" value="tRNA_Me_trans"/>
    <property type="match status" value="1"/>
</dbReference>
<dbReference type="Pfam" id="PF20258">
    <property type="entry name" value="tRNA_Me_trans_C"/>
    <property type="match status" value="1"/>
</dbReference>
<dbReference type="Pfam" id="PF20259">
    <property type="entry name" value="tRNA_Me_trans_M"/>
    <property type="match status" value="1"/>
</dbReference>
<dbReference type="SUPFAM" id="SSF52402">
    <property type="entry name" value="Adenine nucleotide alpha hydrolases-like"/>
    <property type="match status" value="1"/>
</dbReference>
<accession>Q6NA79</accession>
<gene>
    <name evidence="1" type="primary">mnmA</name>
    <name type="ordered locus">RPA1306</name>
</gene>
<keyword id="KW-0067">ATP-binding</keyword>
<keyword id="KW-0963">Cytoplasm</keyword>
<keyword id="KW-1015">Disulfide bond</keyword>
<keyword id="KW-0547">Nucleotide-binding</keyword>
<keyword id="KW-0694">RNA-binding</keyword>
<keyword id="KW-0808">Transferase</keyword>
<keyword id="KW-0819">tRNA processing</keyword>
<keyword id="KW-0820">tRNA-binding</keyword>
<feature type="chain" id="PRO_0000349771" description="tRNA-specific 2-thiouridylase MnmA">
    <location>
        <begin position="1"/>
        <end position="397"/>
    </location>
</feature>
<feature type="region of interest" description="Interaction with tRNA" evidence="1">
    <location>
        <begin position="160"/>
        <end position="162"/>
    </location>
</feature>
<feature type="active site" description="Nucleophile" evidence="1">
    <location>
        <position position="113"/>
    </location>
</feature>
<feature type="active site" description="Cysteine persulfide intermediate" evidence="1">
    <location>
        <position position="210"/>
    </location>
</feature>
<feature type="binding site" evidence="1">
    <location>
        <begin position="19"/>
        <end position="26"/>
    </location>
    <ligand>
        <name>ATP</name>
        <dbReference type="ChEBI" id="CHEBI:30616"/>
    </ligand>
</feature>
<feature type="binding site" evidence="1">
    <location>
        <position position="45"/>
    </location>
    <ligand>
        <name>ATP</name>
        <dbReference type="ChEBI" id="CHEBI:30616"/>
    </ligand>
</feature>
<feature type="binding site" evidence="1">
    <location>
        <position position="137"/>
    </location>
    <ligand>
        <name>ATP</name>
        <dbReference type="ChEBI" id="CHEBI:30616"/>
    </ligand>
</feature>
<feature type="site" description="Interaction with tRNA" evidence="1">
    <location>
        <position position="138"/>
    </location>
</feature>
<feature type="site" description="Interaction with tRNA" evidence="1">
    <location>
        <position position="352"/>
    </location>
</feature>
<feature type="disulfide bond" description="Alternate" evidence="1">
    <location>
        <begin position="113"/>
        <end position="210"/>
    </location>
</feature>
<name>MNMA_RHOPA</name>
<organism>
    <name type="scientific">Rhodopseudomonas palustris (strain ATCC BAA-98 / CGA009)</name>
    <dbReference type="NCBI Taxonomy" id="258594"/>
    <lineage>
        <taxon>Bacteria</taxon>
        <taxon>Pseudomonadati</taxon>
        <taxon>Pseudomonadota</taxon>
        <taxon>Alphaproteobacteria</taxon>
        <taxon>Hyphomicrobiales</taxon>
        <taxon>Nitrobacteraceae</taxon>
        <taxon>Rhodopseudomonas</taxon>
    </lineage>
</organism>
<comment type="function">
    <text evidence="1">Catalyzes the 2-thiolation of uridine at the wobble position (U34) of tRNA, leading to the formation of s(2)U34.</text>
</comment>
<comment type="catalytic activity">
    <reaction evidence="1">
        <text>S-sulfanyl-L-cysteinyl-[protein] + uridine(34) in tRNA + AH2 + ATP = 2-thiouridine(34) in tRNA + L-cysteinyl-[protein] + A + AMP + diphosphate + H(+)</text>
        <dbReference type="Rhea" id="RHEA:47032"/>
        <dbReference type="Rhea" id="RHEA-COMP:10131"/>
        <dbReference type="Rhea" id="RHEA-COMP:11726"/>
        <dbReference type="Rhea" id="RHEA-COMP:11727"/>
        <dbReference type="Rhea" id="RHEA-COMP:11728"/>
        <dbReference type="ChEBI" id="CHEBI:13193"/>
        <dbReference type="ChEBI" id="CHEBI:15378"/>
        <dbReference type="ChEBI" id="CHEBI:17499"/>
        <dbReference type="ChEBI" id="CHEBI:29950"/>
        <dbReference type="ChEBI" id="CHEBI:30616"/>
        <dbReference type="ChEBI" id="CHEBI:33019"/>
        <dbReference type="ChEBI" id="CHEBI:61963"/>
        <dbReference type="ChEBI" id="CHEBI:65315"/>
        <dbReference type="ChEBI" id="CHEBI:87170"/>
        <dbReference type="ChEBI" id="CHEBI:456215"/>
        <dbReference type="EC" id="2.8.1.13"/>
    </reaction>
</comment>
<comment type="subcellular location">
    <subcellularLocation>
        <location evidence="1">Cytoplasm</location>
    </subcellularLocation>
</comment>
<comment type="similarity">
    <text evidence="1">Belongs to the MnmA/TRMU family.</text>
</comment>
<comment type="sequence caution" evidence="2">
    <conflict type="erroneous initiation">
        <sequence resource="EMBL-CDS" id="CAE26749"/>
    </conflict>
</comment>
<evidence type="ECO:0000255" key="1">
    <source>
        <dbReference type="HAMAP-Rule" id="MF_00144"/>
    </source>
</evidence>
<evidence type="ECO:0000305" key="2"/>
<sequence length="397" mass="43155">MLNSLDLEGRPQDTRVVVAMSGGVDSSATAALLKAQGYDVVGITLQLYDHGEAIHRKGACCAGQDIHDARAVAERIGIPHYVLDYESRFRESVIDSFADSYASGETPVPCIECNRSVKFRDLLATARELGASALATGHYVSSRRLDDGSRALVCAADRDRDQSYFLFATTREQLQFLRFPLGDMTKPQTRELARQFGLSVADKHDSQDICFVPTGRYTDVVERLKPNAMEPGDIVDVDGRVLGQHPGIVHFTVGQRRGLGIASRSPLYVLRLDAAQRQVVVGPREALLMDRIVLRDINWIGDGSLDDVIGDGLELFVRVRSTRAPQPAWLRAANGGYEVELVVGEEGVSPGQACVFYDAAEGQARVLGGGFIKSAAPRRFEGGREQIEAPALAAARG</sequence>
<protein>
    <recommendedName>
        <fullName evidence="1">tRNA-specific 2-thiouridylase MnmA</fullName>
        <ecNumber evidence="1">2.8.1.13</ecNumber>
    </recommendedName>
</protein>